<gene>
    <name evidence="1" type="primary">coaX</name>
    <name type="ordered locus">CHAB381_1638</name>
</gene>
<sequence>MILCDIGNSTAKFYNNGISKVMSIKEFQKFEPKDTVYFINVNPNFKRKLKGTLFFDLAPYFEINTLYSKELGVDRIAASCAINDGIVIDAGSAITVDMVNKNIHMGGFILPGITKYVEAYKSISSVLDVGLNSQVNLDKIPLNTRDAITYGVVNSVVLLVENIAKNRKIYITGGDGQFLSQFFKNAVYDKNLVFRSMLNVIKSKGL</sequence>
<dbReference type="EC" id="2.7.1.33" evidence="1"/>
<dbReference type="EMBL" id="CP000776">
    <property type="protein sequence ID" value="ABS52446.1"/>
    <property type="molecule type" value="Genomic_DNA"/>
</dbReference>
<dbReference type="RefSeq" id="WP_012109466.1">
    <property type="nucleotide sequence ID" value="NC_009714.1"/>
</dbReference>
<dbReference type="SMR" id="A7I3S0"/>
<dbReference type="STRING" id="360107.CHAB381_1638"/>
<dbReference type="KEGG" id="cha:CHAB381_1638"/>
<dbReference type="eggNOG" id="COG1521">
    <property type="taxonomic scope" value="Bacteria"/>
</dbReference>
<dbReference type="HOGENOM" id="CLU_1213471_0_0_7"/>
<dbReference type="OrthoDB" id="5347692at2"/>
<dbReference type="UniPathway" id="UPA00241">
    <property type="reaction ID" value="UER00352"/>
</dbReference>
<dbReference type="Proteomes" id="UP000002407">
    <property type="component" value="Chromosome"/>
</dbReference>
<dbReference type="GO" id="GO:0005737">
    <property type="term" value="C:cytoplasm"/>
    <property type="evidence" value="ECO:0007669"/>
    <property type="project" value="UniProtKB-SubCell"/>
</dbReference>
<dbReference type="GO" id="GO:0005524">
    <property type="term" value="F:ATP binding"/>
    <property type="evidence" value="ECO:0007669"/>
    <property type="project" value="UniProtKB-UniRule"/>
</dbReference>
<dbReference type="GO" id="GO:0046872">
    <property type="term" value="F:metal ion binding"/>
    <property type="evidence" value="ECO:0007669"/>
    <property type="project" value="UniProtKB-KW"/>
</dbReference>
<dbReference type="GO" id="GO:0004594">
    <property type="term" value="F:pantothenate kinase activity"/>
    <property type="evidence" value="ECO:0007669"/>
    <property type="project" value="UniProtKB-UniRule"/>
</dbReference>
<dbReference type="GO" id="GO:0015937">
    <property type="term" value="P:coenzyme A biosynthetic process"/>
    <property type="evidence" value="ECO:0007669"/>
    <property type="project" value="UniProtKB-UniRule"/>
</dbReference>
<dbReference type="CDD" id="cd24015">
    <property type="entry name" value="ASKHA_NBD_PanK-III"/>
    <property type="match status" value="1"/>
</dbReference>
<dbReference type="Gene3D" id="3.30.420.40">
    <property type="match status" value="2"/>
</dbReference>
<dbReference type="HAMAP" id="MF_01274">
    <property type="entry name" value="Pantothen_kinase_3"/>
    <property type="match status" value="1"/>
</dbReference>
<dbReference type="InterPro" id="IPR043129">
    <property type="entry name" value="ATPase_NBD"/>
</dbReference>
<dbReference type="InterPro" id="IPR004619">
    <property type="entry name" value="Type_III_PanK"/>
</dbReference>
<dbReference type="NCBIfam" id="TIGR00671">
    <property type="entry name" value="baf"/>
    <property type="match status" value="1"/>
</dbReference>
<dbReference type="NCBIfam" id="NF009872">
    <property type="entry name" value="PRK13333.1"/>
    <property type="match status" value="1"/>
</dbReference>
<dbReference type="PANTHER" id="PTHR34265">
    <property type="entry name" value="TYPE III PANTOTHENATE KINASE"/>
    <property type="match status" value="1"/>
</dbReference>
<dbReference type="PANTHER" id="PTHR34265:SF1">
    <property type="entry name" value="TYPE III PANTOTHENATE KINASE"/>
    <property type="match status" value="1"/>
</dbReference>
<dbReference type="Pfam" id="PF03309">
    <property type="entry name" value="Pan_kinase"/>
    <property type="match status" value="1"/>
</dbReference>
<dbReference type="SUPFAM" id="SSF53067">
    <property type="entry name" value="Actin-like ATPase domain"/>
    <property type="match status" value="2"/>
</dbReference>
<accession>A7I3S0</accession>
<keyword id="KW-0067">ATP-binding</keyword>
<keyword id="KW-0173">Coenzyme A biosynthesis</keyword>
<keyword id="KW-0963">Cytoplasm</keyword>
<keyword id="KW-0418">Kinase</keyword>
<keyword id="KW-0479">Metal-binding</keyword>
<keyword id="KW-0547">Nucleotide-binding</keyword>
<keyword id="KW-0630">Potassium</keyword>
<keyword id="KW-1185">Reference proteome</keyword>
<keyword id="KW-0808">Transferase</keyword>
<organism>
    <name type="scientific">Campylobacter hominis (strain ATCC BAA-381 / DSM 21671 / CCUG 45161 / LMG 19568 / NCTC 13146 / CH001A)</name>
    <dbReference type="NCBI Taxonomy" id="360107"/>
    <lineage>
        <taxon>Bacteria</taxon>
        <taxon>Pseudomonadati</taxon>
        <taxon>Campylobacterota</taxon>
        <taxon>Epsilonproteobacteria</taxon>
        <taxon>Campylobacterales</taxon>
        <taxon>Campylobacteraceae</taxon>
        <taxon>Campylobacter</taxon>
    </lineage>
</organism>
<comment type="function">
    <text evidence="1">Catalyzes the phosphorylation of pantothenate (Pan), the first step in CoA biosynthesis.</text>
</comment>
<comment type="catalytic activity">
    <reaction evidence="1">
        <text>(R)-pantothenate + ATP = (R)-4'-phosphopantothenate + ADP + H(+)</text>
        <dbReference type="Rhea" id="RHEA:16373"/>
        <dbReference type="ChEBI" id="CHEBI:10986"/>
        <dbReference type="ChEBI" id="CHEBI:15378"/>
        <dbReference type="ChEBI" id="CHEBI:29032"/>
        <dbReference type="ChEBI" id="CHEBI:30616"/>
        <dbReference type="ChEBI" id="CHEBI:456216"/>
        <dbReference type="EC" id="2.7.1.33"/>
    </reaction>
</comment>
<comment type="cofactor">
    <cofactor evidence="1">
        <name>NH4(+)</name>
        <dbReference type="ChEBI" id="CHEBI:28938"/>
    </cofactor>
    <cofactor evidence="1">
        <name>K(+)</name>
        <dbReference type="ChEBI" id="CHEBI:29103"/>
    </cofactor>
    <text evidence="1">A monovalent cation. Ammonium or potassium.</text>
</comment>
<comment type="pathway">
    <text evidence="1">Cofactor biosynthesis; coenzyme A biosynthesis; CoA from (R)-pantothenate: step 1/5.</text>
</comment>
<comment type="subunit">
    <text evidence="1">Homodimer.</text>
</comment>
<comment type="subcellular location">
    <subcellularLocation>
        <location evidence="1">Cytoplasm</location>
    </subcellularLocation>
</comment>
<comment type="similarity">
    <text evidence="1">Belongs to the type III pantothenate kinase family.</text>
</comment>
<feature type="chain" id="PRO_1000054368" description="Type III pantothenate kinase">
    <location>
        <begin position="1"/>
        <end position="206"/>
    </location>
</feature>
<feature type="active site" description="Proton acceptor" evidence="1">
    <location>
        <position position="74"/>
    </location>
</feature>
<feature type="binding site" evidence="1">
    <location>
        <begin position="5"/>
        <end position="12"/>
    </location>
    <ligand>
        <name>ATP</name>
        <dbReference type="ChEBI" id="CHEBI:30616"/>
    </ligand>
</feature>
<feature type="binding site" evidence="1">
    <location>
        <position position="67"/>
    </location>
    <ligand>
        <name>substrate</name>
    </ligand>
</feature>
<feature type="binding site" evidence="1">
    <location>
        <begin position="72"/>
        <end position="75"/>
    </location>
    <ligand>
        <name>substrate</name>
    </ligand>
</feature>
<feature type="binding site" evidence="1">
    <location>
        <position position="89"/>
    </location>
    <ligand>
        <name>K(+)</name>
        <dbReference type="ChEBI" id="CHEBI:29103"/>
    </ligand>
</feature>
<feature type="binding site" evidence="1">
    <location>
        <position position="92"/>
    </location>
    <ligand>
        <name>ATP</name>
        <dbReference type="ChEBI" id="CHEBI:30616"/>
    </ligand>
</feature>
<feature type="binding site" evidence="1">
    <location>
        <position position="144"/>
    </location>
    <ligand>
        <name>substrate</name>
    </ligand>
</feature>
<evidence type="ECO:0000255" key="1">
    <source>
        <dbReference type="HAMAP-Rule" id="MF_01274"/>
    </source>
</evidence>
<reference key="1">
    <citation type="submission" date="2007-07" db="EMBL/GenBank/DDBJ databases">
        <title>Complete genome sequence of Campylobacter hominis ATCC BAA-381, a commensal isolated from the human gastrointestinal tract.</title>
        <authorList>
            <person name="Fouts D.E."/>
            <person name="Mongodin E.F."/>
            <person name="Puiu D."/>
            <person name="Sebastian Y."/>
            <person name="Miller W.G."/>
            <person name="Mandrell R.E."/>
            <person name="Nelson K.E."/>
        </authorList>
    </citation>
    <scope>NUCLEOTIDE SEQUENCE [LARGE SCALE GENOMIC DNA]</scope>
    <source>
        <strain>ATCC BAA-381 / DSM 21671 / CCUG 45161 / LMG 19568 / NCTC 13146 / CH001A</strain>
    </source>
</reference>
<protein>
    <recommendedName>
        <fullName evidence="1">Type III pantothenate kinase</fullName>
        <ecNumber evidence="1">2.7.1.33</ecNumber>
    </recommendedName>
    <alternativeName>
        <fullName evidence="1">PanK-III</fullName>
    </alternativeName>
    <alternativeName>
        <fullName evidence="1">Pantothenic acid kinase</fullName>
    </alternativeName>
</protein>
<proteinExistence type="inferred from homology"/>
<name>COAX_CAMHC</name>